<gene>
    <name evidence="1" type="primary">lolA</name>
    <name type="ordered locus">ABO_1291</name>
</gene>
<reference key="1">
    <citation type="journal article" date="2006" name="Nat. Biotechnol.">
        <title>Genome sequence of the ubiquitous hydrocarbon-degrading marine bacterium Alcanivorax borkumensis.</title>
        <authorList>
            <person name="Schneiker S."/>
            <person name="Martins dos Santos V.A.P."/>
            <person name="Bartels D."/>
            <person name="Bekel T."/>
            <person name="Brecht M."/>
            <person name="Buhrmester J."/>
            <person name="Chernikova T.N."/>
            <person name="Denaro R."/>
            <person name="Ferrer M."/>
            <person name="Gertler C."/>
            <person name="Goesmann A."/>
            <person name="Golyshina O.V."/>
            <person name="Kaminski F."/>
            <person name="Khachane A.N."/>
            <person name="Lang S."/>
            <person name="Linke B."/>
            <person name="McHardy A.C."/>
            <person name="Meyer F."/>
            <person name="Nechitaylo T."/>
            <person name="Puehler A."/>
            <person name="Regenhardt D."/>
            <person name="Rupp O."/>
            <person name="Sabirova J.S."/>
            <person name="Selbitschka W."/>
            <person name="Yakimov M.M."/>
            <person name="Timmis K.N."/>
            <person name="Vorhoelter F.-J."/>
            <person name="Weidner S."/>
            <person name="Kaiser O."/>
            <person name="Golyshin P.N."/>
        </authorList>
    </citation>
    <scope>NUCLEOTIDE SEQUENCE [LARGE SCALE GENOMIC DNA]</scope>
    <source>
        <strain>ATCC 700651 / DSM 11573 / NCIMB 13689 / SK2</strain>
    </source>
</reference>
<dbReference type="EMBL" id="AM286690">
    <property type="protein sequence ID" value="CAL16739.1"/>
    <property type="molecule type" value="Genomic_DNA"/>
</dbReference>
<dbReference type="RefSeq" id="WP_011588573.1">
    <property type="nucleotide sequence ID" value="NC_008260.1"/>
</dbReference>
<dbReference type="SMR" id="Q0VQ09"/>
<dbReference type="STRING" id="393595.ABO_1291"/>
<dbReference type="KEGG" id="abo:ABO_1291"/>
<dbReference type="eggNOG" id="COG2834">
    <property type="taxonomic scope" value="Bacteria"/>
</dbReference>
<dbReference type="HOGENOM" id="CLU_087560_0_0_6"/>
<dbReference type="OrthoDB" id="9787361at2"/>
<dbReference type="Proteomes" id="UP000008871">
    <property type="component" value="Chromosome"/>
</dbReference>
<dbReference type="GO" id="GO:0030288">
    <property type="term" value="C:outer membrane-bounded periplasmic space"/>
    <property type="evidence" value="ECO:0007669"/>
    <property type="project" value="TreeGrafter"/>
</dbReference>
<dbReference type="GO" id="GO:0044874">
    <property type="term" value="P:lipoprotein localization to outer membrane"/>
    <property type="evidence" value="ECO:0007669"/>
    <property type="project" value="UniProtKB-UniRule"/>
</dbReference>
<dbReference type="GO" id="GO:0042953">
    <property type="term" value="P:lipoprotein transport"/>
    <property type="evidence" value="ECO:0007669"/>
    <property type="project" value="InterPro"/>
</dbReference>
<dbReference type="CDD" id="cd16325">
    <property type="entry name" value="LolA"/>
    <property type="match status" value="1"/>
</dbReference>
<dbReference type="Gene3D" id="2.50.20.10">
    <property type="entry name" value="Lipoprotein localisation LolA/LolB/LppX"/>
    <property type="match status" value="1"/>
</dbReference>
<dbReference type="HAMAP" id="MF_00240">
    <property type="entry name" value="LolA"/>
    <property type="match status" value="1"/>
</dbReference>
<dbReference type="InterPro" id="IPR029046">
    <property type="entry name" value="LolA/LolB/LppX"/>
</dbReference>
<dbReference type="InterPro" id="IPR004564">
    <property type="entry name" value="OM_lipoprot_carrier_LolA-like"/>
</dbReference>
<dbReference type="InterPro" id="IPR018323">
    <property type="entry name" value="OM_lipoprot_carrier_LolA_Pbac"/>
</dbReference>
<dbReference type="NCBIfam" id="TIGR00547">
    <property type="entry name" value="lolA"/>
    <property type="match status" value="1"/>
</dbReference>
<dbReference type="PANTHER" id="PTHR35869">
    <property type="entry name" value="OUTER-MEMBRANE LIPOPROTEIN CARRIER PROTEIN"/>
    <property type="match status" value="1"/>
</dbReference>
<dbReference type="PANTHER" id="PTHR35869:SF1">
    <property type="entry name" value="OUTER-MEMBRANE LIPOPROTEIN CARRIER PROTEIN"/>
    <property type="match status" value="1"/>
</dbReference>
<dbReference type="Pfam" id="PF03548">
    <property type="entry name" value="LolA"/>
    <property type="match status" value="1"/>
</dbReference>
<dbReference type="SUPFAM" id="SSF89392">
    <property type="entry name" value="Prokaryotic lipoproteins and lipoprotein localization factors"/>
    <property type="match status" value="1"/>
</dbReference>
<accession>Q0VQ09</accession>
<organism>
    <name type="scientific">Alcanivorax borkumensis (strain ATCC 700651 / DSM 11573 / NCIMB 13689 / SK2)</name>
    <dbReference type="NCBI Taxonomy" id="393595"/>
    <lineage>
        <taxon>Bacteria</taxon>
        <taxon>Pseudomonadati</taxon>
        <taxon>Pseudomonadota</taxon>
        <taxon>Gammaproteobacteria</taxon>
        <taxon>Oceanospirillales</taxon>
        <taxon>Alcanivoracaceae</taxon>
        <taxon>Alcanivorax</taxon>
    </lineage>
</organism>
<keyword id="KW-0143">Chaperone</keyword>
<keyword id="KW-0574">Periplasm</keyword>
<keyword id="KW-0653">Protein transport</keyword>
<keyword id="KW-1185">Reference proteome</keyword>
<keyword id="KW-0732">Signal</keyword>
<keyword id="KW-0813">Transport</keyword>
<evidence type="ECO:0000255" key="1">
    <source>
        <dbReference type="HAMAP-Rule" id="MF_00240"/>
    </source>
</evidence>
<proteinExistence type="inferred from homology"/>
<sequence length="209" mass="23041">MKKLLLTLAMVPAVLFSPTAWGDATDDLLGRLQTLESMKGGFEQVVLDQSGTHMQEALGKFQVARGNRFYWLTETPYEQMAASDGTTVWVYDKDLEQVVVRPLSQDLGQTPALLFGGKPADVAKAFTISERDNRGAEVTYRLTPKGQDPLFDQLDVTFKGGQPASMRLQDALGQQTVIDFIGLTLNDGIDSSLFHFDPPEGTDVIQQQQ</sequence>
<name>LOLA_ALCBS</name>
<comment type="function">
    <text evidence="1">Participates in the translocation of lipoproteins from the inner membrane to the outer membrane. Only forms a complex with a lipoprotein if the residue after the N-terminal Cys is not an aspartate (The Asp acts as a targeting signal to indicate that the lipoprotein should stay in the inner membrane).</text>
</comment>
<comment type="subunit">
    <text evidence="1">Monomer.</text>
</comment>
<comment type="subcellular location">
    <subcellularLocation>
        <location evidence="1">Periplasm</location>
    </subcellularLocation>
</comment>
<comment type="similarity">
    <text evidence="1">Belongs to the LolA family.</text>
</comment>
<feature type="signal peptide" evidence="1">
    <location>
        <begin position="1"/>
        <end position="22"/>
    </location>
</feature>
<feature type="chain" id="PRO_0000336652" description="Outer-membrane lipoprotein carrier protein">
    <location>
        <begin position="23"/>
        <end position="209"/>
    </location>
</feature>
<protein>
    <recommendedName>
        <fullName evidence="1">Outer-membrane lipoprotein carrier protein</fullName>
    </recommendedName>
</protein>